<reference key="1">
    <citation type="journal article" date="2009" name="Vaccine">
        <title>Whole genome sequence analysis of Mycobacterium bovis bacillus Calmette-Guerin (BCG) Tokyo 172: a comparative study of BCG vaccine substrains.</title>
        <authorList>
            <person name="Seki M."/>
            <person name="Honda I."/>
            <person name="Fujita I."/>
            <person name="Yano I."/>
            <person name="Yamamoto S."/>
            <person name="Koyama A."/>
        </authorList>
    </citation>
    <scope>NUCLEOTIDE SEQUENCE [LARGE SCALE GENOMIC DNA]</scope>
    <source>
        <strain>BCG / Tokyo 172 / ATCC 35737 / TMC 1019</strain>
    </source>
</reference>
<organism>
    <name type="scientific">Mycobacterium bovis (strain BCG / Tokyo 172 / ATCC 35737 / TMC 1019)</name>
    <dbReference type="NCBI Taxonomy" id="561275"/>
    <lineage>
        <taxon>Bacteria</taxon>
        <taxon>Bacillati</taxon>
        <taxon>Actinomycetota</taxon>
        <taxon>Actinomycetes</taxon>
        <taxon>Mycobacteriales</taxon>
        <taxon>Mycobacteriaceae</taxon>
        <taxon>Mycobacterium</taxon>
        <taxon>Mycobacterium tuberculosis complex</taxon>
    </lineage>
</organism>
<gene>
    <name evidence="1" type="primary">hemE</name>
    <name type="ordered locus">JTY_2685</name>
</gene>
<feature type="chain" id="PRO_1000197529" description="Uroporphyrinogen decarboxylase">
    <location>
        <begin position="1"/>
        <end position="357"/>
    </location>
</feature>
<feature type="binding site" evidence="1">
    <location>
        <begin position="30"/>
        <end position="34"/>
    </location>
    <ligand>
        <name>substrate</name>
    </ligand>
</feature>
<feature type="binding site" evidence="1">
    <location>
        <position position="79"/>
    </location>
    <ligand>
        <name>substrate</name>
    </ligand>
</feature>
<feature type="binding site" evidence="1">
    <location>
        <position position="154"/>
    </location>
    <ligand>
        <name>substrate</name>
    </ligand>
</feature>
<feature type="binding site" evidence="1">
    <location>
        <position position="209"/>
    </location>
    <ligand>
        <name>substrate</name>
    </ligand>
</feature>
<feature type="binding site" evidence="1">
    <location>
        <position position="336"/>
    </location>
    <ligand>
        <name>substrate</name>
    </ligand>
</feature>
<feature type="site" description="Transition state stabilizer" evidence="1">
    <location>
        <position position="79"/>
    </location>
</feature>
<name>DCUP_MYCBT</name>
<keyword id="KW-0963">Cytoplasm</keyword>
<keyword id="KW-0210">Decarboxylase</keyword>
<keyword id="KW-0456">Lyase</keyword>
<keyword id="KW-0627">Porphyrin biosynthesis</keyword>
<sequence>MSTRRDLPQSPYLAAVTGRKPSRVPVWFMRQAGRSLPEYRALRERYSMLAACFEPDVACEITLQPIRRYDVDAAILFSDIVVPLRAAGVDLDIVADVGPVIADPVRTAADVAAMKPLDPQAIQPVLVAASLLVAELGDVPLIGFAGAPFTLASYLVEGGPSRHHAHVKAMMLAEPASWHALMAKLTDLTIAFLVGQIDAGVDAIQVFDSWAGALSPIDYRQYVLPHSARVFAALGEHGVPMTHFGVGTAELLGAMSEAVTAGERPGRGAVVGVDWRTPLTDAAARVVPGTALQGNLDPAVVLAGWPAVERAARAVVDDGRRAVDAGAAGHIFNLGHGVLPESDPAVLADLVSLVHSL</sequence>
<protein>
    <recommendedName>
        <fullName evidence="1">Uroporphyrinogen decarboxylase</fullName>
        <shortName evidence="1">UPD</shortName>
        <shortName evidence="1">URO-D</shortName>
        <ecNumber evidence="1">4.1.1.37</ecNumber>
    </recommendedName>
</protein>
<dbReference type="EC" id="4.1.1.37" evidence="1"/>
<dbReference type="EMBL" id="AP010918">
    <property type="protein sequence ID" value="BAH26966.1"/>
    <property type="molecule type" value="Genomic_DNA"/>
</dbReference>
<dbReference type="RefSeq" id="WP_003413873.1">
    <property type="nucleotide sequence ID" value="NZ_CP014566.1"/>
</dbReference>
<dbReference type="SMR" id="C1AFD7"/>
<dbReference type="GeneID" id="45426666"/>
<dbReference type="KEGG" id="mbt:JTY_2685"/>
<dbReference type="HOGENOM" id="CLU_040933_0_1_11"/>
<dbReference type="UniPathway" id="UPA00251">
    <property type="reaction ID" value="UER00321"/>
</dbReference>
<dbReference type="GO" id="GO:0005829">
    <property type="term" value="C:cytosol"/>
    <property type="evidence" value="ECO:0007669"/>
    <property type="project" value="TreeGrafter"/>
</dbReference>
<dbReference type="GO" id="GO:0004853">
    <property type="term" value="F:uroporphyrinogen decarboxylase activity"/>
    <property type="evidence" value="ECO:0007669"/>
    <property type="project" value="UniProtKB-UniRule"/>
</dbReference>
<dbReference type="GO" id="GO:0006782">
    <property type="term" value="P:protoporphyrinogen IX biosynthetic process"/>
    <property type="evidence" value="ECO:0007669"/>
    <property type="project" value="UniProtKB-UniRule"/>
</dbReference>
<dbReference type="CDD" id="cd00717">
    <property type="entry name" value="URO-D"/>
    <property type="match status" value="1"/>
</dbReference>
<dbReference type="FunFam" id="3.20.20.210:FF:000007">
    <property type="entry name" value="Uroporphyrinogen decarboxylase"/>
    <property type="match status" value="1"/>
</dbReference>
<dbReference type="Gene3D" id="3.20.20.210">
    <property type="match status" value="1"/>
</dbReference>
<dbReference type="HAMAP" id="MF_00218">
    <property type="entry name" value="URO_D"/>
    <property type="match status" value="1"/>
</dbReference>
<dbReference type="InterPro" id="IPR038071">
    <property type="entry name" value="UROD/MetE-like_sf"/>
</dbReference>
<dbReference type="InterPro" id="IPR006361">
    <property type="entry name" value="Uroporphyrinogen_deCO2ase_HemE"/>
</dbReference>
<dbReference type="InterPro" id="IPR000257">
    <property type="entry name" value="Uroporphyrinogen_deCOase"/>
</dbReference>
<dbReference type="NCBIfam" id="TIGR01464">
    <property type="entry name" value="hemE"/>
    <property type="match status" value="1"/>
</dbReference>
<dbReference type="PANTHER" id="PTHR21091">
    <property type="entry name" value="METHYLTETRAHYDROFOLATE:HOMOCYSTEINE METHYLTRANSFERASE RELATED"/>
    <property type="match status" value="1"/>
</dbReference>
<dbReference type="PANTHER" id="PTHR21091:SF169">
    <property type="entry name" value="UROPORPHYRINOGEN DECARBOXYLASE"/>
    <property type="match status" value="1"/>
</dbReference>
<dbReference type="Pfam" id="PF01208">
    <property type="entry name" value="URO-D"/>
    <property type="match status" value="1"/>
</dbReference>
<dbReference type="SUPFAM" id="SSF51726">
    <property type="entry name" value="UROD/MetE-like"/>
    <property type="match status" value="1"/>
</dbReference>
<dbReference type="PROSITE" id="PS00906">
    <property type="entry name" value="UROD_1"/>
    <property type="match status" value="1"/>
</dbReference>
<dbReference type="PROSITE" id="PS00907">
    <property type="entry name" value="UROD_2"/>
    <property type="match status" value="1"/>
</dbReference>
<comment type="function">
    <text evidence="1">Catalyzes the decarboxylation of four acetate groups of uroporphyrinogen-III to yield coproporphyrinogen-III.</text>
</comment>
<comment type="catalytic activity">
    <reaction evidence="1">
        <text>uroporphyrinogen III + 4 H(+) = coproporphyrinogen III + 4 CO2</text>
        <dbReference type="Rhea" id="RHEA:19865"/>
        <dbReference type="ChEBI" id="CHEBI:15378"/>
        <dbReference type="ChEBI" id="CHEBI:16526"/>
        <dbReference type="ChEBI" id="CHEBI:57308"/>
        <dbReference type="ChEBI" id="CHEBI:57309"/>
        <dbReference type="EC" id="4.1.1.37"/>
    </reaction>
</comment>
<comment type="pathway">
    <text evidence="1">Porphyrin-containing compound metabolism; protoporphyrin-IX biosynthesis; coproporphyrinogen-III from 5-aminolevulinate: step 4/4.</text>
</comment>
<comment type="subunit">
    <text evidence="1">Homodimer.</text>
</comment>
<comment type="subcellular location">
    <subcellularLocation>
        <location evidence="1">Cytoplasm</location>
    </subcellularLocation>
</comment>
<comment type="similarity">
    <text evidence="1">Belongs to the uroporphyrinogen decarboxylase family.</text>
</comment>
<proteinExistence type="inferred from homology"/>
<evidence type="ECO:0000255" key="1">
    <source>
        <dbReference type="HAMAP-Rule" id="MF_00218"/>
    </source>
</evidence>
<accession>C1AFD7</accession>